<feature type="chain" id="PRO_1000000499" description="Argininosuccinate lyase">
    <location>
        <begin position="1"/>
        <end position="492"/>
    </location>
</feature>
<name>ARLY_METLZ</name>
<evidence type="ECO:0000255" key="1">
    <source>
        <dbReference type="HAMAP-Rule" id="MF_00006"/>
    </source>
</evidence>
<reference key="1">
    <citation type="journal article" date="2009" name="Stand. Genomic Sci.">
        <title>Complete genome sequence of Methanocorpusculum labreanum type strain Z.</title>
        <authorList>
            <person name="Anderson I.J."/>
            <person name="Sieprawska-Lupa M."/>
            <person name="Goltsman E."/>
            <person name="Lapidus A."/>
            <person name="Copeland A."/>
            <person name="Glavina Del Rio T."/>
            <person name="Tice H."/>
            <person name="Dalin E."/>
            <person name="Barry K."/>
            <person name="Pitluck S."/>
            <person name="Hauser L."/>
            <person name="Land M."/>
            <person name="Lucas S."/>
            <person name="Richardson P."/>
            <person name="Whitman W.B."/>
            <person name="Kyrpides N.C."/>
        </authorList>
    </citation>
    <scope>NUCLEOTIDE SEQUENCE [LARGE SCALE GENOMIC DNA]</scope>
    <source>
        <strain>ATCC 43576 / DSM 4855 / Z</strain>
    </source>
</reference>
<protein>
    <recommendedName>
        <fullName evidence="1">Argininosuccinate lyase</fullName>
        <shortName evidence="1">ASAL</shortName>
        <ecNumber evidence="1">4.3.2.1</ecNumber>
    </recommendedName>
    <alternativeName>
        <fullName evidence="1">Arginosuccinase</fullName>
    </alternativeName>
</protein>
<dbReference type="EC" id="4.3.2.1" evidence="1"/>
<dbReference type="EMBL" id="CP000559">
    <property type="protein sequence ID" value="ABN06750.1"/>
    <property type="molecule type" value="Genomic_DNA"/>
</dbReference>
<dbReference type="RefSeq" id="WP_011832951.1">
    <property type="nucleotide sequence ID" value="NC_008942.1"/>
</dbReference>
<dbReference type="SMR" id="A2SQZ4"/>
<dbReference type="STRING" id="410358.Mlab_0576"/>
<dbReference type="GeneID" id="4795595"/>
<dbReference type="KEGG" id="mla:Mlab_0576"/>
<dbReference type="eggNOG" id="arCOG01748">
    <property type="taxonomic scope" value="Archaea"/>
</dbReference>
<dbReference type="HOGENOM" id="CLU_027272_2_3_2"/>
<dbReference type="OrthoDB" id="27337at2157"/>
<dbReference type="UniPathway" id="UPA00068">
    <property type="reaction ID" value="UER00114"/>
</dbReference>
<dbReference type="Proteomes" id="UP000000365">
    <property type="component" value="Chromosome"/>
</dbReference>
<dbReference type="GO" id="GO:0005829">
    <property type="term" value="C:cytosol"/>
    <property type="evidence" value="ECO:0007669"/>
    <property type="project" value="TreeGrafter"/>
</dbReference>
<dbReference type="GO" id="GO:0004056">
    <property type="term" value="F:argininosuccinate lyase activity"/>
    <property type="evidence" value="ECO:0007669"/>
    <property type="project" value="UniProtKB-UniRule"/>
</dbReference>
<dbReference type="GO" id="GO:0042450">
    <property type="term" value="P:arginine biosynthetic process via ornithine"/>
    <property type="evidence" value="ECO:0007669"/>
    <property type="project" value="InterPro"/>
</dbReference>
<dbReference type="GO" id="GO:0006526">
    <property type="term" value="P:L-arginine biosynthetic process"/>
    <property type="evidence" value="ECO:0007669"/>
    <property type="project" value="UniProtKB-UniRule"/>
</dbReference>
<dbReference type="CDD" id="cd01359">
    <property type="entry name" value="Argininosuccinate_lyase"/>
    <property type="match status" value="1"/>
</dbReference>
<dbReference type="FunFam" id="1.20.200.10:FF:000015">
    <property type="entry name" value="argininosuccinate lyase isoform X2"/>
    <property type="match status" value="1"/>
</dbReference>
<dbReference type="Gene3D" id="1.10.40.30">
    <property type="entry name" value="Fumarase/aspartase (C-terminal domain)"/>
    <property type="match status" value="1"/>
</dbReference>
<dbReference type="Gene3D" id="1.20.200.10">
    <property type="entry name" value="Fumarase/aspartase (Central domain)"/>
    <property type="match status" value="1"/>
</dbReference>
<dbReference type="Gene3D" id="1.10.275.10">
    <property type="entry name" value="Fumarase/aspartase (N-terminal domain)"/>
    <property type="match status" value="1"/>
</dbReference>
<dbReference type="HAMAP" id="MF_00006">
    <property type="entry name" value="Arg_succ_lyase"/>
    <property type="match status" value="1"/>
</dbReference>
<dbReference type="InterPro" id="IPR029419">
    <property type="entry name" value="Arg_succ_lyase_C"/>
</dbReference>
<dbReference type="InterPro" id="IPR009049">
    <property type="entry name" value="Argininosuccinate_lyase"/>
</dbReference>
<dbReference type="InterPro" id="IPR024083">
    <property type="entry name" value="Fumarase/histidase_N"/>
</dbReference>
<dbReference type="InterPro" id="IPR000362">
    <property type="entry name" value="Fumarate_lyase_fam"/>
</dbReference>
<dbReference type="InterPro" id="IPR022761">
    <property type="entry name" value="Fumarate_lyase_N"/>
</dbReference>
<dbReference type="InterPro" id="IPR008948">
    <property type="entry name" value="L-Aspartase-like"/>
</dbReference>
<dbReference type="NCBIfam" id="TIGR00838">
    <property type="entry name" value="argH"/>
    <property type="match status" value="1"/>
</dbReference>
<dbReference type="PANTHER" id="PTHR43814">
    <property type="entry name" value="ARGININOSUCCINATE LYASE"/>
    <property type="match status" value="1"/>
</dbReference>
<dbReference type="PANTHER" id="PTHR43814:SF1">
    <property type="entry name" value="ARGININOSUCCINATE LYASE"/>
    <property type="match status" value="1"/>
</dbReference>
<dbReference type="Pfam" id="PF14698">
    <property type="entry name" value="ASL_C2"/>
    <property type="match status" value="1"/>
</dbReference>
<dbReference type="Pfam" id="PF00206">
    <property type="entry name" value="Lyase_1"/>
    <property type="match status" value="1"/>
</dbReference>
<dbReference type="PRINTS" id="PR00145">
    <property type="entry name" value="ARGSUCLYASE"/>
</dbReference>
<dbReference type="PRINTS" id="PR00149">
    <property type="entry name" value="FUMRATELYASE"/>
</dbReference>
<dbReference type="SUPFAM" id="SSF48557">
    <property type="entry name" value="L-aspartase-like"/>
    <property type="match status" value="1"/>
</dbReference>
<keyword id="KW-0028">Amino-acid biosynthesis</keyword>
<keyword id="KW-0055">Arginine biosynthesis</keyword>
<keyword id="KW-0963">Cytoplasm</keyword>
<keyword id="KW-0456">Lyase</keyword>
<keyword id="KW-1185">Reference proteome</keyword>
<accession>A2SQZ4</accession>
<sequence>MAKDQIRNGRLEGERSALIEQYLSSMEADKQIAESDIRVDIAHILMLRKQNLIDGASAKKLLTALLGYLENGLPENAFDMTREDIHAGIEAQLIADAGSDAGGRMHLGRSRNDEVATCLRMRTRELLIDTLTALFELRQSLISRAEEHTTTIMPGFTHLQHAQPTTLAHYLLAYESLFARDTSRLFDAYTRVNISPLGSAAFAGTGFPIDRSLTAEYLGFANPMENSMDAVANRDFIVETLSDLAILMTNISRICEELILWSTSFVKFVNLNDAYCSTSSIMPQKKNPDTLEIMRAKSAAVIGELTAALTLIKSLPMSYNRDLQDLNPHLWNAFRQTNMSLPLLAEIISTAEFNVPVMKKQAVVGNTTATELADFLVREYNIPFRTAHNIVGRAVKLGSLDLDIVDSVAKELANISLKEKGLTEETIKKVLHPVTILRQKQSFGSPNPKMMKKAVKVADIRLVQDQVTGDILQDQLRDADEKMKTAIQELDL</sequence>
<organism>
    <name type="scientific">Methanocorpusculum labreanum (strain ATCC 43576 / DSM 4855 / Z)</name>
    <dbReference type="NCBI Taxonomy" id="410358"/>
    <lineage>
        <taxon>Archaea</taxon>
        <taxon>Methanobacteriati</taxon>
        <taxon>Methanobacteriota</taxon>
        <taxon>Stenosarchaea group</taxon>
        <taxon>Methanomicrobia</taxon>
        <taxon>Methanomicrobiales</taxon>
        <taxon>Methanocorpusculaceae</taxon>
        <taxon>Methanocorpusculum</taxon>
    </lineage>
</organism>
<gene>
    <name evidence="1" type="primary">argH</name>
    <name type="ordered locus">Mlab_0576</name>
</gene>
<proteinExistence type="inferred from homology"/>
<comment type="catalytic activity">
    <reaction evidence="1">
        <text>2-(N(omega)-L-arginino)succinate = fumarate + L-arginine</text>
        <dbReference type="Rhea" id="RHEA:24020"/>
        <dbReference type="ChEBI" id="CHEBI:29806"/>
        <dbReference type="ChEBI" id="CHEBI:32682"/>
        <dbReference type="ChEBI" id="CHEBI:57472"/>
        <dbReference type="EC" id="4.3.2.1"/>
    </reaction>
</comment>
<comment type="pathway">
    <text evidence="1">Amino-acid biosynthesis; L-arginine biosynthesis; L-arginine from L-ornithine and carbamoyl phosphate: step 3/3.</text>
</comment>
<comment type="subcellular location">
    <subcellularLocation>
        <location evidence="1">Cytoplasm</location>
    </subcellularLocation>
</comment>
<comment type="similarity">
    <text evidence="1">Belongs to the lyase 1 family. Argininosuccinate lyase subfamily.</text>
</comment>